<dbReference type="EMBL" id="X76768">
    <property type="protein sequence ID" value="CAA54164.1"/>
    <property type="molecule type" value="Genomic_DNA"/>
</dbReference>
<dbReference type="EMBL" id="AE006641">
    <property type="protein sequence ID" value="AAK40523.1"/>
    <property type="molecule type" value="Genomic_DNA"/>
</dbReference>
<dbReference type="PIR" id="S57268">
    <property type="entry name" value="S57268"/>
</dbReference>
<dbReference type="RefSeq" id="WP_009990404.1">
    <property type="nucleotide sequence ID" value="NC_002754.1"/>
</dbReference>
<dbReference type="SMR" id="Q64214"/>
<dbReference type="STRING" id="273057.SSO5345"/>
<dbReference type="PaxDb" id="273057-SSO5345"/>
<dbReference type="EnsemblBacteria" id="AAK40523">
    <property type="protein sequence ID" value="AAK40523"/>
    <property type="gene ID" value="SSO5345"/>
</dbReference>
<dbReference type="KEGG" id="sso:SSO5345"/>
<dbReference type="PATRIC" id="fig|273057.12.peg.173"/>
<dbReference type="eggNOG" id="arCOG01988">
    <property type="taxonomic scope" value="Archaea"/>
</dbReference>
<dbReference type="HOGENOM" id="CLU_165896_1_0_2"/>
<dbReference type="InParanoid" id="Q64214"/>
<dbReference type="PhylomeDB" id="Q64214"/>
<dbReference type="BRENDA" id="3.6.5.3">
    <property type="organism ID" value="6163"/>
</dbReference>
<dbReference type="Proteomes" id="UP000001974">
    <property type="component" value="Chromosome"/>
</dbReference>
<dbReference type="GO" id="GO:0003746">
    <property type="term" value="F:translation elongation factor activity"/>
    <property type="evidence" value="ECO:0007669"/>
    <property type="project" value="UniProtKB-UniRule"/>
</dbReference>
<dbReference type="CDD" id="cd00292">
    <property type="entry name" value="EF1B"/>
    <property type="match status" value="1"/>
</dbReference>
<dbReference type="Gene3D" id="3.30.70.60">
    <property type="match status" value="1"/>
</dbReference>
<dbReference type="HAMAP" id="MF_00043">
    <property type="entry name" value="EF1_beta"/>
    <property type="match status" value="1"/>
</dbReference>
<dbReference type="InterPro" id="IPR036219">
    <property type="entry name" value="eEF-1beta-like_sf"/>
</dbReference>
<dbReference type="InterPro" id="IPR014038">
    <property type="entry name" value="EF1B_bsu/dsu_GNE"/>
</dbReference>
<dbReference type="InterPro" id="IPR014717">
    <property type="entry name" value="Transl_elong_EF1B/ribsomal_bS6"/>
</dbReference>
<dbReference type="InterPro" id="IPR004542">
    <property type="entry name" value="Transl_elong_EF1B_B_arc"/>
</dbReference>
<dbReference type="NCBIfam" id="TIGR00489">
    <property type="entry name" value="aEF-1_beta"/>
    <property type="match status" value="1"/>
</dbReference>
<dbReference type="NCBIfam" id="NF001670">
    <property type="entry name" value="PRK00435.1"/>
    <property type="match status" value="1"/>
</dbReference>
<dbReference type="PANTHER" id="PTHR39647">
    <property type="entry name" value="ELONGATION FACTOR 1-BETA"/>
    <property type="match status" value="1"/>
</dbReference>
<dbReference type="PANTHER" id="PTHR39647:SF1">
    <property type="entry name" value="ELONGATION FACTOR 1-BETA"/>
    <property type="match status" value="1"/>
</dbReference>
<dbReference type="Pfam" id="PF00736">
    <property type="entry name" value="EF1_GNE"/>
    <property type="match status" value="1"/>
</dbReference>
<dbReference type="PIRSF" id="PIRSF006521">
    <property type="entry name" value="Transl_elong_EF1B_B_arc"/>
    <property type="match status" value="1"/>
</dbReference>
<dbReference type="SMART" id="SM00888">
    <property type="entry name" value="EF1_GNE"/>
    <property type="match status" value="1"/>
</dbReference>
<dbReference type="SUPFAM" id="SSF54984">
    <property type="entry name" value="eEF-1beta-like"/>
    <property type="match status" value="1"/>
</dbReference>
<protein>
    <recommendedName>
        <fullName>Elongation factor 1-beta</fullName>
        <shortName>EF-1-beta</shortName>
    </recommendedName>
    <alternativeName>
        <fullName>aEF-1beta</fullName>
    </alternativeName>
</protein>
<keyword id="KW-0903">Direct protein sequencing</keyword>
<keyword id="KW-0251">Elongation factor</keyword>
<keyword id="KW-0648">Protein biosynthesis</keyword>
<keyword id="KW-1185">Reference proteome</keyword>
<comment type="function">
    <text evidence="2">Promotes the exchange of GDP for GTP in EF-1-alpha/GDP, thus allowing the regeneration of EF-1-alpha/GTP that could then be used to form the ternary complex EF-1-alpha/GTP/AAtRNA.</text>
</comment>
<comment type="subunit">
    <text evidence="2">Homodimer.</text>
</comment>
<comment type="mass spectrometry" mass="10006.0" method="Electrospray" evidence="2"/>
<comment type="similarity">
    <text evidence="3">Belongs to the EF-1-beta/EF-1-delta family.</text>
</comment>
<accession>Q64214</accession>
<organism>
    <name type="scientific">Saccharolobus solfataricus (strain ATCC 35092 / DSM 1617 / JCM 11322 / P2)</name>
    <name type="common">Sulfolobus solfataricus</name>
    <dbReference type="NCBI Taxonomy" id="273057"/>
    <lineage>
        <taxon>Archaea</taxon>
        <taxon>Thermoproteota</taxon>
        <taxon>Thermoprotei</taxon>
        <taxon>Sulfolobales</taxon>
        <taxon>Sulfolobaceae</taxon>
        <taxon>Saccharolobus</taxon>
    </lineage>
</organism>
<sequence length="91" mass="10137">MTDVLVVLKVFPDSDEVNLDNLYTDISSKLPKEYKIIRKETEPIAFGLNALILYVQMPEQTEGGTDNLEEVVNNIQGVSHAEVVGITRLGF</sequence>
<proteinExistence type="evidence at protein level"/>
<feature type="initiator methionine" description="Removed" evidence="1 2">
    <location>
        <position position="1"/>
    </location>
</feature>
<feature type="chain" id="PRO_0000155068" description="Elongation factor 1-beta">
    <location>
        <begin position="2"/>
        <end position="91"/>
    </location>
</feature>
<reference key="1">
    <citation type="journal article" date="1995" name="Biochim. Biophys. Acta">
        <title>The first nucleotide sequence of an archaeal elongation factor 1 beta gene.</title>
        <authorList>
            <person name="Arcari P."/>
            <person name="Raimo G."/>
            <person name="Ianniciello G."/>
            <person name="Gallo M."/>
            <person name="Bocchini V."/>
        </authorList>
    </citation>
    <scope>NUCLEOTIDE SEQUENCE [GENOMIC DNA]</scope>
    <scope>PROTEIN SEQUENCE OF 2-12 AND 83-91</scope>
    <source>
        <strain>DSM 5833 / MT-4</strain>
    </source>
</reference>
<reference key="2">
    <citation type="journal article" date="2001" name="Proc. Natl. Acad. Sci. U.S.A.">
        <title>The complete genome of the crenarchaeon Sulfolobus solfataricus P2.</title>
        <authorList>
            <person name="She Q."/>
            <person name="Singh R.K."/>
            <person name="Confalonieri F."/>
            <person name="Zivanovic Y."/>
            <person name="Allard G."/>
            <person name="Awayez M.J."/>
            <person name="Chan-Weiher C.C.-Y."/>
            <person name="Clausen I.G."/>
            <person name="Curtis B.A."/>
            <person name="De Moors A."/>
            <person name="Erauso G."/>
            <person name="Fletcher C."/>
            <person name="Gordon P.M.K."/>
            <person name="Heikamp-de Jong I."/>
            <person name="Jeffries A.C."/>
            <person name="Kozera C.J."/>
            <person name="Medina N."/>
            <person name="Peng X."/>
            <person name="Thi-Ngoc H.P."/>
            <person name="Redder P."/>
            <person name="Schenk M.E."/>
            <person name="Theriault C."/>
            <person name="Tolstrup N."/>
            <person name="Charlebois R.L."/>
            <person name="Doolittle W.F."/>
            <person name="Duguet M."/>
            <person name="Gaasterland T."/>
            <person name="Garrett R.A."/>
            <person name="Ragan M.A."/>
            <person name="Sensen C.W."/>
            <person name="Van der Oost J."/>
        </authorList>
    </citation>
    <scope>NUCLEOTIDE SEQUENCE [LARGE SCALE GENOMIC DNA]</scope>
    <source>
        <strain>ATCC 35092 / DSM 1617 / JCM 11322 / P2</strain>
    </source>
</reference>
<reference key="3">
    <citation type="journal article" date="1996" name="Biochim. Biophys. Acta">
        <title>Archaeal elongation factor 1 beta is a dimer. Primary structure, molecular and biochemical properties.</title>
        <authorList>
            <person name="Raimo G."/>
            <person name="Masullo M."/>
            <person name="Savino G."/>
            <person name="Scarano G."/>
            <person name="Ianniciello G."/>
            <person name="Parente A."/>
            <person name="Bocchini V."/>
        </authorList>
    </citation>
    <scope>PROTEIN SEQUENCE OF 2-91</scope>
    <scope>FUNCTION</scope>
    <scope>SUBUNIT</scope>
    <scope>MASS SPECTROMETRY</scope>
    <source>
        <strain>DSM 5833 / MT-4</strain>
    </source>
</reference>
<gene>
    <name type="primary">ef1b</name>
    <name type="ordered locus">SSO5345</name>
</gene>
<name>EF1B_SACS2</name>
<evidence type="ECO:0000269" key="1">
    <source>
    </source>
</evidence>
<evidence type="ECO:0000269" key="2">
    <source>
    </source>
</evidence>
<evidence type="ECO:0000305" key="3"/>